<sequence length="341" mass="36848">MGLTYKDSGVDKEKGYEEVQIIKEIVKKTHGKEVLTGIGGFAGLFKPELTDMKEPVLVSGTDGVGTKIKLAMELDKHDTVGIDLVAMCVNDVLCQGAKPLFFLDYIATGSLKPAKMADLVRGVAEGCSQSECALIGGETAEMPGLYKENDYDLAGFAVGIVDRDKIIDGSGIKEGDVAISLSSSGVHSNGFSLVRAALDMANVKLSDKFEDTTVGERLLVPTRIYEKEISALLKEVEIKGIAHITGGGLYENVPRMLPENIGIEFDIKESEIDSVFKAIQKWGNVETKEMFSTFNMGIGMVVVVDAKDVDKSLEILQKIDPKAKQCGVCKKTETSVKINLK</sequence>
<proteinExistence type="inferred from homology"/>
<reference key="1">
    <citation type="journal article" date="2008" name="DNA Res.">
        <title>Complete genome sequence of Finegoldia magna, an anaerobic opportunistic pathogen.</title>
        <authorList>
            <person name="Goto T."/>
            <person name="Yamashita A."/>
            <person name="Hirakawa H."/>
            <person name="Matsutani M."/>
            <person name="Todo K."/>
            <person name="Ohshima K."/>
            <person name="Toh H."/>
            <person name="Miyamoto K."/>
            <person name="Kuhara S."/>
            <person name="Hattori M."/>
            <person name="Shimizu T."/>
            <person name="Akimoto S."/>
        </authorList>
    </citation>
    <scope>NUCLEOTIDE SEQUENCE [LARGE SCALE GENOMIC DNA]</scope>
    <source>
        <strain>ATCC 29328 / DSM 20472 / WAL 2508</strain>
    </source>
</reference>
<protein>
    <recommendedName>
        <fullName evidence="1">Phosphoribosylformylglycinamidine cyclo-ligase</fullName>
        <ecNumber evidence="1">6.3.3.1</ecNumber>
    </recommendedName>
    <alternativeName>
        <fullName evidence="1">AIR synthase</fullName>
    </alternativeName>
    <alternativeName>
        <fullName evidence="1">AIRS</fullName>
    </alternativeName>
    <alternativeName>
        <fullName evidence="1">Phosphoribosyl-aminoimidazole synthetase</fullName>
    </alternativeName>
</protein>
<dbReference type="EC" id="6.3.3.1" evidence="1"/>
<dbReference type="EMBL" id="AP008971">
    <property type="protein sequence ID" value="BAG07729.1"/>
    <property type="molecule type" value="Genomic_DNA"/>
</dbReference>
<dbReference type="RefSeq" id="WP_012290319.1">
    <property type="nucleotide sequence ID" value="NC_010376.1"/>
</dbReference>
<dbReference type="SMR" id="B0S0R2"/>
<dbReference type="STRING" id="334413.FMG_0311"/>
<dbReference type="KEGG" id="fma:FMG_0311"/>
<dbReference type="eggNOG" id="COG0150">
    <property type="taxonomic scope" value="Bacteria"/>
</dbReference>
<dbReference type="HOGENOM" id="CLU_047116_0_0_9"/>
<dbReference type="UniPathway" id="UPA00074">
    <property type="reaction ID" value="UER00129"/>
</dbReference>
<dbReference type="Proteomes" id="UP000001319">
    <property type="component" value="Chromosome"/>
</dbReference>
<dbReference type="GO" id="GO:0005829">
    <property type="term" value="C:cytosol"/>
    <property type="evidence" value="ECO:0007669"/>
    <property type="project" value="TreeGrafter"/>
</dbReference>
<dbReference type="GO" id="GO:0005524">
    <property type="term" value="F:ATP binding"/>
    <property type="evidence" value="ECO:0007669"/>
    <property type="project" value="UniProtKB-KW"/>
</dbReference>
<dbReference type="GO" id="GO:0004637">
    <property type="term" value="F:phosphoribosylamine-glycine ligase activity"/>
    <property type="evidence" value="ECO:0007669"/>
    <property type="project" value="TreeGrafter"/>
</dbReference>
<dbReference type="GO" id="GO:0004641">
    <property type="term" value="F:phosphoribosylformylglycinamidine cyclo-ligase activity"/>
    <property type="evidence" value="ECO:0007669"/>
    <property type="project" value="UniProtKB-UniRule"/>
</dbReference>
<dbReference type="GO" id="GO:0006189">
    <property type="term" value="P:'de novo' IMP biosynthetic process"/>
    <property type="evidence" value="ECO:0007669"/>
    <property type="project" value="UniProtKB-UniRule"/>
</dbReference>
<dbReference type="GO" id="GO:0046084">
    <property type="term" value="P:adenine biosynthetic process"/>
    <property type="evidence" value="ECO:0007669"/>
    <property type="project" value="TreeGrafter"/>
</dbReference>
<dbReference type="CDD" id="cd02196">
    <property type="entry name" value="PurM"/>
    <property type="match status" value="1"/>
</dbReference>
<dbReference type="FunFam" id="3.30.1330.10:FF:000001">
    <property type="entry name" value="Phosphoribosylformylglycinamidine cyclo-ligase"/>
    <property type="match status" value="1"/>
</dbReference>
<dbReference type="FunFam" id="3.90.650.10:FF:000011">
    <property type="entry name" value="Phosphoribosylformylglycinamidine cyclo-ligase"/>
    <property type="match status" value="1"/>
</dbReference>
<dbReference type="Gene3D" id="3.90.650.10">
    <property type="entry name" value="PurM-like C-terminal domain"/>
    <property type="match status" value="1"/>
</dbReference>
<dbReference type="Gene3D" id="3.30.1330.10">
    <property type="entry name" value="PurM-like, N-terminal domain"/>
    <property type="match status" value="1"/>
</dbReference>
<dbReference type="HAMAP" id="MF_00741">
    <property type="entry name" value="AIRS"/>
    <property type="match status" value="1"/>
</dbReference>
<dbReference type="InterPro" id="IPR010918">
    <property type="entry name" value="PurM-like_C_dom"/>
</dbReference>
<dbReference type="InterPro" id="IPR036676">
    <property type="entry name" value="PurM-like_C_sf"/>
</dbReference>
<dbReference type="InterPro" id="IPR016188">
    <property type="entry name" value="PurM-like_N"/>
</dbReference>
<dbReference type="InterPro" id="IPR036921">
    <property type="entry name" value="PurM-like_N_sf"/>
</dbReference>
<dbReference type="InterPro" id="IPR004733">
    <property type="entry name" value="PurM_cligase"/>
</dbReference>
<dbReference type="NCBIfam" id="TIGR00878">
    <property type="entry name" value="purM"/>
    <property type="match status" value="1"/>
</dbReference>
<dbReference type="PANTHER" id="PTHR10520:SF12">
    <property type="entry name" value="TRIFUNCTIONAL PURINE BIOSYNTHETIC PROTEIN ADENOSINE-3"/>
    <property type="match status" value="1"/>
</dbReference>
<dbReference type="PANTHER" id="PTHR10520">
    <property type="entry name" value="TRIFUNCTIONAL PURINE BIOSYNTHETIC PROTEIN ADENOSINE-3-RELATED"/>
    <property type="match status" value="1"/>
</dbReference>
<dbReference type="Pfam" id="PF00586">
    <property type="entry name" value="AIRS"/>
    <property type="match status" value="1"/>
</dbReference>
<dbReference type="Pfam" id="PF02769">
    <property type="entry name" value="AIRS_C"/>
    <property type="match status" value="1"/>
</dbReference>
<dbReference type="SUPFAM" id="SSF56042">
    <property type="entry name" value="PurM C-terminal domain-like"/>
    <property type="match status" value="1"/>
</dbReference>
<dbReference type="SUPFAM" id="SSF55326">
    <property type="entry name" value="PurM N-terminal domain-like"/>
    <property type="match status" value="1"/>
</dbReference>
<keyword id="KW-0067">ATP-binding</keyword>
<keyword id="KW-0963">Cytoplasm</keyword>
<keyword id="KW-0436">Ligase</keyword>
<keyword id="KW-0547">Nucleotide-binding</keyword>
<keyword id="KW-0658">Purine biosynthesis</keyword>
<keyword id="KW-1185">Reference proteome</keyword>
<comment type="catalytic activity">
    <reaction evidence="1">
        <text>2-formamido-N(1)-(5-O-phospho-beta-D-ribosyl)acetamidine + ATP = 5-amino-1-(5-phospho-beta-D-ribosyl)imidazole + ADP + phosphate + H(+)</text>
        <dbReference type="Rhea" id="RHEA:23032"/>
        <dbReference type="ChEBI" id="CHEBI:15378"/>
        <dbReference type="ChEBI" id="CHEBI:30616"/>
        <dbReference type="ChEBI" id="CHEBI:43474"/>
        <dbReference type="ChEBI" id="CHEBI:137981"/>
        <dbReference type="ChEBI" id="CHEBI:147287"/>
        <dbReference type="ChEBI" id="CHEBI:456216"/>
        <dbReference type="EC" id="6.3.3.1"/>
    </reaction>
</comment>
<comment type="pathway">
    <text evidence="1">Purine metabolism; IMP biosynthesis via de novo pathway; 5-amino-1-(5-phospho-D-ribosyl)imidazole from N(2)-formyl-N(1)-(5-phospho-D-ribosyl)glycinamide: step 2/2.</text>
</comment>
<comment type="subcellular location">
    <subcellularLocation>
        <location evidence="1">Cytoplasm</location>
    </subcellularLocation>
</comment>
<comment type="similarity">
    <text evidence="1">Belongs to the AIR synthase family.</text>
</comment>
<gene>
    <name evidence="1" type="primary">purM</name>
    <name type="ordered locus">FMG_0311</name>
</gene>
<feature type="chain" id="PRO_1000193025" description="Phosphoribosylformylglycinamidine cyclo-ligase">
    <location>
        <begin position="1"/>
        <end position="341"/>
    </location>
</feature>
<evidence type="ECO:0000255" key="1">
    <source>
        <dbReference type="HAMAP-Rule" id="MF_00741"/>
    </source>
</evidence>
<accession>B0S0R2</accession>
<name>PUR5_FINM2</name>
<organism>
    <name type="scientific">Finegoldia magna (strain ATCC 29328 / DSM 20472 / WAL 2508)</name>
    <name type="common">Peptostreptococcus magnus</name>
    <dbReference type="NCBI Taxonomy" id="334413"/>
    <lineage>
        <taxon>Bacteria</taxon>
        <taxon>Bacillati</taxon>
        <taxon>Bacillota</taxon>
        <taxon>Tissierellia</taxon>
        <taxon>Tissierellales</taxon>
        <taxon>Peptoniphilaceae</taxon>
        <taxon>Finegoldia</taxon>
    </lineage>
</organism>